<feature type="chain" id="PRO_0000089536" description="Centromere protein Q">
    <location>
        <begin position="1"/>
        <end position="270"/>
    </location>
</feature>
<feature type="region of interest" description="Disordered" evidence="3">
    <location>
        <begin position="1"/>
        <end position="59"/>
    </location>
</feature>
<feature type="coiled-coil region" evidence="2">
    <location>
        <begin position="143"/>
        <end position="205"/>
    </location>
</feature>
<feature type="compositionally biased region" description="Basic residues" evidence="3">
    <location>
        <begin position="7"/>
        <end position="20"/>
    </location>
</feature>
<feature type="compositionally biased region" description="Basic residues" evidence="3">
    <location>
        <begin position="39"/>
        <end position="48"/>
    </location>
</feature>
<feature type="modified residue" description="Phosphoserine" evidence="1">
    <location>
        <position position="52"/>
    </location>
</feature>
<comment type="function">
    <text evidence="1">Component of the CENPA-CAD (nucleosome distal) complex, a complex recruited to centromeres which is involved in assembly of kinetochore proteins, mitotic progression and chromosome segregation. May be involved in incorporation of newly synthesized CENPA into centromeres via its interaction with the CENPA-NAC complex. Plays an important role in chromosome congression and in the recruitment of CENP-O complex (which comprises CENPO, CENPP, CENPQ and CENPU), CENPE and PLK1 to the kinetochores.</text>
</comment>
<comment type="subunit">
    <text evidence="1">Component of the CENPA-CAD complex, composed of CENPI, CENPK, CENPL, CENPO, CENPP, CENPQ, CENPR and CENPS. The CENPA-CAD complex interacts with the CENPA-NAC complex, at least composed of CENPA, CENPC, CENPH, CENPM, CENPN, CENPT and CENPU.</text>
</comment>
<comment type="subcellular location">
    <subcellularLocation>
        <location evidence="1">Nucleus</location>
    </subcellularLocation>
    <subcellularLocation>
        <location evidence="1">Chromosome</location>
        <location evidence="1">Centromere</location>
    </subcellularLocation>
    <text evidence="1">Localizes exclusively in the centromeres. The CENPA-CAD complex is probably recruited on centromeres by the CENPA-NAC complex.</text>
</comment>
<comment type="PTM">
    <text evidence="1">Phosphorylation at Ser-52 is essential for CENPE recruitment to kinetochores and orderly chromosome congression.</text>
</comment>
<comment type="similarity">
    <text evidence="4">Belongs to the CENP-Q/OKP1 family.</text>
</comment>
<name>CENPQ_RAT</name>
<evidence type="ECO:0000250" key="1">
    <source>
        <dbReference type="UniProtKB" id="Q7L2Z9"/>
    </source>
</evidence>
<evidence type="ECO:0000255" key="2"/>
<evidence type="ECO:0000256" key="3">
    <source>
        <dbReference type="SAM" id="MobiDB-lite"/>
    </source>
</evidence>
<evidence type="ECO:0000305" key="4"/>
<organism>
    <name type="scientific">Rattus norvegicus</name>
    <name type="common">Rat</name>
    <dbReference type="NCBI Taxonomy" id="10116"/>
    <lineage>
        <taxon>Eukaryota</taxon>
        <taxon>Metazoa</taxon>
        <taxon>Chordata</taxon>
        <taxon>Craniata</taxon>
        <taxon>Vertebrata</taxon>
        <taxon>Euteleostomi</taxon>
        <taxon>Mammalia</taxon>
        <taxon>Eutheria</taxon>
        <taxon>Euarchontoglires</taxon>
        <taxon>Glires</taxon>
        <taxon>Rodentia</taxon>
        <taxon>Myomorpha</taxon>
        <taxon>Muroidea</taxon>
        <taxon>Muridae</taxon>
        <taxon>Murinae</taxon>
        <taxon>Rattus</taxon>
    </lineage>
</organism>
<accession>Q66H02</accession>
<proteinExistence type="evidence at transcript level"/>
<keyword id="KW-0137">Centromere</keyword>
<keyword id="KW-0158">Chromosome</keyword>
<keyword id="KW-0175">Coiled coil</keyword>
<keyword id="KW-0539">Nucleus</keyword>
<keyword id="KW-0597">Phosphoprotein</keyword>
<keyword id="KW-1185">Reference proteome</keyword>
<gene>
    <name type="primary">Cenpq</name>
</gene>
<reference key="1">
    <citation type="journal article" date="2004" name="Genome Res.">
        <title>The status, quality, and expansion of the NIH full-length cDNA project: the Mammalian Gene Collection (MGC).</title>
        <authorList>
            <consortium name="The MGC Project Team"/>
        </authorList>
    </citation>
    <scope>NUCLEOTIDE SEQUENCE [LARGE SCALE MRNA]</scope>
    <source>
        <tissue>Testis</tissue>
    </source>
</reference>
<dbReference type="EMBL" id="BC082113">
    <property type="protein sequence ID" value="AAH82113.1"/>
    <property type="molecule type" value="mRNA"/>
</dbReference>
<dbReference type="RefSeq" id="NP_001014237.1">
    <property type="nucleotide sequence ID" value="NM_001014215.2"/>
</dbReference>
<dbReference type="SMR" id="Q66H02"/>
<dbReference type="FunCoup" id="Q66H02">
    <property type="interactions" value="1464"/>
</dbReference>
<dbReference type="STRING" id="10116.ENSRNOP00000072803"/>
<dbReference type="iPTMnet" id="Q66H02"/>
<dbReference type="PhosphoSitePlus" id="Q66H02"/>
<dbReference type="DNASU" id="363198"/>
<dbReference type="GeneID" id="363198"/>
<dbReference type="KEGG" id="rno:363198"/>
<dbReference type="UCSC" id="RGD:1359451">
    <property type="organism name" value="rat"/>
</dbReference>
<dbReference type="AGR" id="RGD:1359451"/>
<dbReference type="CTD" id="55166"/>
<dbReference type="RGD" id="1359451">
    <property type="gene designation" value="Cenpq"/>
</dbReference>
<dbReference type="InParanoid" id="Q66H02"/>
<dbReference type="PhylomeDB" id="Q66H02"/>
<dbReference type="Reactome" id="R-RNO-141444">
    <property type="pathway name" value="Amplification of signal from unattached kinetochores via a MAD2 inhibitory signal"/>
</dbReference>
<dbReference type="Reactome" id="R-RNO-2467813">
    <property type="pathway name" value="Separation of Sister Chromatids"/>
</dbReference>
<dbReference type="Reactome" id="R-RNO-2500257">
    <property type="pathway name" value="Resolution of Sister Chromatid Cohesion"/>
</dbReference>
<dbReference type="Reactome" id="R-RNO-5663220">
    <property type="pathway name" value="RHO GTPases Activate Formins"/>
</dbReference>
<dbReference type="Reactome" id="R-RNO-606279">
    <property type="pathway name" value="Deposition of new CENPA-containing nucleosomes at the centromere"/>
</dbReference>
<dbReference type="Reactome" id="R-RNO-68877">
    <property type="pathway name" value="Mitotic Prometaphase"/>
</dbReference>
<dbReference type="Reactome" id="R-RNO-9648025">
    <property type="pathway name" value="EML4 and NUDC in mitotic spindle formation"/>
</dbReference>
<dbReference type="PRO" id="PR:Q66H02"/>
<dbReference type="Proteomes" id="UP000002494">
    <property type="component" value="Unplaced"/>
</dbReference>
<dbReference type="GO" id="GO:0000939">
    <property type="term" value="C:inner kinetochore"/>
    <property type="evidence" value="ECO:0000266"/>
    <property type="project" value="RGD"/>
</dbReference>
<dbReference type="GO" id="GO:0005634">
    <property type="term" value="C:nucleus"/>
    <property type="evidence" value="ECO:0000318"/>
    <property type="project" value="GO_Central"/>
</dbReference>
<dbReference type="GO" id="GO:0051310">
    <property type="term" value="P:metaphase chromosome alignment"/>
    <property type="evidence" value="ECO:0000250"/>
    <property type="project" value="UniProtKB"/>
</dbReference>
<dbReference type="GO" id="GO:1905342">
    <property type="term" value="P:positive regulation of protein localization to kinetochore"/>
    <property type="evidence" value="ECO:0000250"/>
    <property type="project" value="UniProtKB"/>
</dbReference>
<dbReference type="InterPro" id="IPR025212">
    <property type="entry name" value="CAD_CENP-Q"/>
</dbReference>
<dbReference type="PANTHER" id="PTHR31345">
    <property type="entry name" value="CENTROMERE PROTEIN Q"/>
    <property type="match status" value="1"/>
</dbReference>
<dbReference type="PANTHER" id="PTHR31345:SF3">
    <property type="entry name" value="CENTROMERE PROTEIN Q"/>
    <property type="match status" value="1"/>
</dbReference>
<dbReference type="Pfam" id="PF13094">
    <property type="entry name" value="CENP-Q"/>
    <property type="match status" value="1"/>
</dbReference>
<protein>
    <recommendedName>
        <fullName>Centromere protein Q</fullName>
        <shortName>CENP-Q</shortName>
    </recommendedName>
</protein>
<sequence>MSGKANTSKKKSQRVKRNVKQRADKEDEELDSPENKVGNRAKRNRSHAGHLSSKEQTKCVHLKRVKISSNKRTAWQPLPKNTEEYLQSMMDSAILGILNKNIKRKEQIQYHLDQLKKRFLQQCATLKVPPGKLNYLRDMSKLLKVEREQERANEESLASLQEEIDKIVETTESMTENIESLKTKIEILTNEVEKEEEEMKEVFHIDSNKVLALPELSQKSLKAPILQKEILTLIPNQNALLKDLDVLQNSAPGKNMAAFIQEAYMKLNGS</sequence>